<gene>
    <name evidence="1" type="primary">thf1</name>
    <name type="ordered locus">Ava_4577</name>
</gene>
<protein>
    <recommendedName>
        <fullName evidence="1">Protein Thf1</fullName>
    </recommendedName>
</protein>
<proteinExistence type="inferred from homology"/>
<comment type="function">
    <text evidence="1">May be involved in photosynthetic membrane biogenesis.</text>
</comment>
<comment type="similarity">
    <text evidence="1">Belongs to the THF1 family.</text>
</comment>
<evidence type="ECO:0000255" key="1">
    <source>
        <dbReference type="HAMAP-Rule" id="MF_01843"/>
    </source>
</evidence>
<evidence type="ECO:0000256" key="2">
    <source>
        <dbReference type="SAM" id="MobiDB-lite"/>
    </source>
</evidence>
<keyword id="KW-0175">Coiled coil</keyword>
<accession>Q3M4B2</accession>
<sequence>MELLRTVSDTKRTFYALHTRPINTIYRRVVEELMVEMHLLSVNVDFSYNPIYALGVVTTFDRFMQGYQPERDKESIFSAICQAVEQEPQRYRQDAERLKAVAQSLPVNDLVAWLSQANHLQQDADLQAQLQAIASNPNFKYSRLFAIGLFTLLEQSNPDLVKDEKQRTEALKTIAAGLHLSDDKLSKDLELYRSNLDKMTQALAVMADMLTADRKKREQRQQQASTPVAPPNE</sequence>
<organism>
    <name type="scientific">Trichormus variabilis (strain ATCC 29413 / PCC 7937)</name>
    <name type="common">Anabaena variabilis</name>
    <dbReference type="NCBI Taxonomy" id="240292"/>
    <lineage>
        <taxon>Bacteria</taxon>
        <taxon>Bacillati</taxon>
        <taxon>Cyanobacteriota</taxon>
        <taxon>Cyanophyceae</taxon>
        <taxon>Nostocales</taxon>
        <taxon>Nostocaceae</taxon>
        <taxon>Trichormus</taxon>
    </lineage>
</organism>
<reference key="1">
    <citation type="journal article" date="2014" name="Stand. Genomic Sci.">
        <title>Complete genome sequence of Anabaena variabilis ATCC 29413.</title>
        <authorList>
            <person name="Thiel T."/>
            <person name="Pratte B.S."/>
            <person name="Zhong J."/>
            <person name="Goodwin L."/>
            <person name="Copeland A."/>
            <person name="Lucas S."/>
            <person name="Han C."/>
            <person name="Pitluck S."/>
            <person name="Land M.L."/>
            <person name="Kyrpides N.C."/>
            <person name="Woyke T."/>
        </authorList>
    </citation>
    <scope>NUCLEOTIDE SEQUENCE [LARGE SCALE GENOMIC DNA]</scope>
    <source>
        <strain>ATCC 29413 / PCC 7937</strain>
    </source>
</reference>
<feature type="chain" id="PRO_0000235211" description="Protein Thf1">
    <location>
        <begin position="1"/>
        <end position="233"/>
    </location>
</feature>
<feature type="region of interest" description="Disordered" evidence="2">
    <location>
        <begin position="213"/>
        <end position="233"/>
    </location>
</feature>
<feature type="coiled-coil region" evidence="1">
    <location>
        <begin position="183"/>
        <end position="205"/>
    </location>
</feature>
<name>THF1_TRIV2</name>
<dbReference type="EMBL" id="CP000117">
    <property type="protein sequence ID" value="ABA24174.1"/>
    <property type="molecule type" value="Genomic_DNA"/>
</dbReference>
<dbReference type="SMR" id="Q3M4B2"/>
<dbReference type="STRING" id="240292.Ava_4577"/>
<dbReference type="KEGG" id="ava:Ava_4577"/>
<dbReference type="eggNOG" id="ENOG502Z86M">
    <property type="taxonomic scope" value="Bacteria"/>
</dbReference>
<dbReference type="HOGENOM" id="CLU_079763_1_0_3"/>
<dbReference type="Proteomes" id="UP000002533">
    <property type="component" value="Chromosome"/>
</dbReference>
<dbReference type="GO" id="GO:0030096">
    <property type="term" value="C:plasma membrane-derived thylakoid photosystem II"/>
    <property type="evidence" value="ECO:0007669"/>
    <property type="project" value="TreeGrafter"/>
</dbReference>
<dbReference type="GO" id="GO:0010207">
    <property type="term" value="P:photosystem II assembly"/>
    <property type="evidence" value="ECO:0007669"/>
    <property type="project" value="InterPro"/>
</dbReference>
<dbReference type="HAMAP" id="MF_01843">
    <property type="entry name" value="Thf1"/>
    <property type="match status" value="1"/>
</dbReference>
<dbReference type="InterPro" id="IPR017499">
    <property type="entry name" value="Thf1"/>
</dbReference>
<dbReference type="NCBIfam" id="TIGR03060">
    <property type="entry name" value="PS_II_psb29"/>
    <property type="match status" value="1"/>
</dbReference>
<dbReference type="PANTHER" id="PTHR34793">
    <property type="entry name" value="PROTEIN THYLAKOID FORMATION 1, CHLOROPLASTIC"/>
    <property type="match status" value="1"/>
</dbReference>
<dbReference type="PANTHER" id="PTHR34793:SF1">
    <property type="entry name" value="PROTEIN THYLAKOID FORMATION 1, CHLOROPLASTIC"/>
    <property type="match status" value="1"/>
</dbReference>
<dbReference type="Pfam" id="PF11264">
    <property type="entry name" value="ThylakoidFormat"/>
    <property type="match status" value="1"/>
</dbReference>